<accession>Q94V00</accession>
<feature type="chain" id="PRO_0000255095" description="Cytochrome b">
    <location>
        <begin position="1"/>
        <end position="380"/>
    </location>
</feature>
<feature type="transmembrane region" description="Helical" evidence="2">
    <location>
        <begin position="33"/>
        <end position="53"/>
    </location>
</feature>
<feature type="transmembrane region" description="Helical" evidence="2">
    <location>
        <begin position="77"/>
        <end position="98"/>
    </location>
</feature>
<feature type="transmembrane region" description="Helical" evidence="2">
    <location>
        <begin position="113"/>
        <end position="133"/>
    </location>
</feature>
<feature type="transmembrane region" description="Helical" evidence="2">
    <location>
        <begin position="178"/>
        <end position="198"/>
    </location>
</feature>
<feature type="transmembrane region" description="Helical" evidence="2">
    <location>
        <begin position="226"/>
        <end position="246"/>
    </location>
</feature>
<feature type="transmembrane region" description="Helical" evidence="2">
    <location>
        <begin position="288"/>
        <end position="308"/>
    </location>
</feature>
<feature type="transmembrane region" description="Helical" evidence="2">
    <location>
        <begin position="320"/>
        <end position="340"/>
    </location>
</feature>
<feature type="transmembrane region" description="Helical" evidence="2">
    <location>
        <begin position="347"/>
        <end position="367"/>
    </location>
</feature>
<feature type="binding site" description="axial binding residue" evidence="2">
    <location>
        <position position="83"/>
    </location>
    <ligand>
        <name>heme b</name>
        <dbReference type="ChEBI" id="CHEBI:60344"/>
        <label>b562</label>
    </ligand>
    <ligandPart>
        <name>Fe</name>
        <dbReference type="ChEBI" id="CHEBI:18248"/>
    </ligandPart>
</feature>
<feature type="binding site" description="axial binding residue" evidence="2">
    <location>
        <position position="97"/>
    </location>
    <ligand>
        <name>heme b</name>
        <dbReference type="ChEBI" id="CHEBI:60344"/>
        <label>b566</label>
    </ligand>
    <ligandPart>
        <name>Fe</name>
        <dbReference type="ChEBI" id="CHEBI:18248"/>
    </ligandPart>
</feature>
<feature type="binding site" description="axial binding residue" evidence="2">
    <location>
        <position position="182"/>
    </location>
    <ligand>
        <name>heme b</name>
        <dbReference type="ChEBI" id="CHEBI:60344"/>
        <label>b562</label>
    </ligand>
    <ligandPart>
        <name>Fe</name>
        <dbReference type="ChEBI" id="CHEBI:18248"/>
    </ligandPart>
</feature>
<feature type="binding site" description="axial binding residue" evidence="2">
    <location>
        <position position="196"/>
    </location>
    <ligand>
        <name>heme b</name>
        <dbReference type="ChEBI" id="CHEBI:60344"/>
        <label>b566</label>
    </ligand>
    <ligandPart>
        <name>Fe</name>
        <dbReference type="ChEBI" id="CHEBI:18248"/>
    </ligandPart>
</feature>
<feature type="binding site" evidence="2">
    <location>
        <position position="201"/>
    </location>
    <ligand>
        <name>a ubiquinone</name>
        <dbReference type="ChEBI" id="CHEBI:16389"/>
    </ligand>
</feature>
<evidence type="ECO:0000250" key="1"/>
<evidence type="ECO:0000250" key="2">
    <source>
        <dbReference type="UniProtKB" id="P00157"/>
    </source>
</evidence>
<evidence type="ECO:0000255" key="3">
    <source>
        <dbReference type="PROSITE-ProRule" id="PRU00967"/>
    </source>
</evidence>
<evidence type="ECO:0000255" key="4">
    <source>
        <dbReference type="PROSITE-ProRule" id="PRU00968"/>
    </source>
</evidence>
<proteinExistence type="inferred from homology"/>
<gene>
    <name type="primary">MT-CYB</name>
    <name type="synonym">COB</name>
    <name type="synonym">CYTB</name>
    <name type="synonym">MTCYB</name>
</gene>
<dbReference type="EMBL" id="AF410261">
    <property type="protein sequence ID" value="AAK96252.1"/>
    <property type="molecule type" value="Genomic_DNA"/>
</dbReference>
<dbReference type="SMR" id="Q94V00"/>
<dbReference type="GO" id="GO:0005743">
    <property type="term" value="C:mitochondrial inner membrane"/>
    <property type="evidence" value="ECO:0007669"/>
    <property type="project" value="UniProtKB-SubCell"/>
</dbReference>
<dbReference type="GO" id="GO:0045275">
    <property type="term" value="C:respiratory chain complex III"/>
    <property type="evidence" value="ECO:0007669"/>
    <property type="project" value="InterPro"/>
</dbReference>
<dbReference type="GO" id="GO:0046872">
    <property type="term" value="F:metal ion binding"/>
    <property type="evidence" value="ECO:0007669"/>
    <property type="project" value="UniProtKB-KW"/>
</dbReference>
<dbReference type="GO" id="GO:0008121">
    <property type="term" value="F:ubiquinol-cytochrome-c reductase activity"/>
    <property type="evidence" value="ECO:0007669"/>
    <property type="project" value="InterPro"/>
</dbReference>
<dbReference type="GO" id="GO:0006122">
    <property type="term" value="P:mitochondrial electron transport, ubiquinol to cytochrome c"/>
    <property type="evidence" value="ECO:0007669"/>
    <property type="project" value="TreeGrafter"/>
</dbReference>
<dbReference type="CDD" id="cd00290">
    <property type="entry name" value="cytochrome_b_C"/>
    <property type="match status" value="1"/>
</dbReference>
<dbReference type="CDD" id="cd00284">
    <property type="entry name" value="Cytochrome_b_N"/>
    <property type="match status" value="1"/>
</dbReference>
<dbReference type="FunFam" id="1.20.810.10:FF:000002">
    <property type="entry name" value="Cytochrome b"/>
    <property type="match status" value="1"/>
</dbReference>
<dbReference type="Gene3D" id="1.20.810.10">
    <property type="entry name" value="Cytochrome Bc1 Complex, Chain C"/>
    <property type="match status" value="1"/>
</dbReference>
<dbReference type="InterPro" id="IPR005798">
    <property type="entry name" value="Cyt_b/b6_C"/>
</dbReference>
<dbReference type="InterPro" id="IPR036150">
    <property type="entry name" value="Cyt_b/b6_C_sf"/>
</dbReference>
<dbReference type="InterPro" id="IPR005797">
    <property type="entry name" value="Cyt_b/b6_N"/>
</dbReference>
<dbReference type="InterPro" id="IPR027387">
    <property type="entry name" value="Cytb/b6-like_sf"/>
</dbReference>
<dbReference type="InterPro" id="IPR030689">
    <property type="entry name" value="Cytochrome_b"/>
</dbReference>
<dbReference type="InterPro" id="IPR048260">
    <property type="entry name" value="Cytochrome_b_C_euk/bac"/>
</dbReference>
<dbReference type="InterPro" id="IPR048259">
    <property type="entry name" value="Cytochrome_b_N_euk/bac"/>
</dbReference>
<dbReference type="InterPro" id="IPR016174">
    <property type="entry name" value="Di-haem_cyt_TM"/>
</dbReference>
<dbReference type="PANTHER" id="PTHR19271">
    <property type="entry name" value="CYTOCHROME B"/>
    <property type="match status" value="1"/>
</dbReference>
<dbReference type="PANTHER" id="PTHR19271:SF16">
    <property type="entry name" value="CYTOCHROME B"/>
    <property type="match status" value="1"/>
</dbReference>
<dbReference type="Pfam" id="PF00032">
    <property type="entry name" value="Cytochrom_B_C"/>
    <property type="match status" value="1"/>
</dbReference>
<dbReference type="Pfam" id="PF00033">
    <property type="entry name" value="Cytochrome_B"/>
    <property type="match status" value="1"/>
</dbReference>
<dbReference type="PIRSF" id="PIRSF038885">
    <property type="entry name" value="COB"/>
    <property type="match status" value="1"/>
</dbReference>
<dbReference type="SUPFAM" id="SSF81648">
    <property type="entry name" value="a domain/subunit of cytochrome bc1 complex (Ubiquinol-cytochrome c reductase)"/>
    <property type="match status" value="1"/>
</dbReference>
<dbReference type="SUPFAM" id="SSF81342">
    <property type="entry name" value="Transmembrane di-heme cytochromes"/>
    <property type="match status" value="1"/>
</dbReference>
<dbReference type="PROSITE" id="PS51003">
    <property type="entry name" value="CYTB_CTER"/>
    <property type="match status" value="1"/>
</dbReference>
<dbReference type="PROSITE" id="PS51002">
    <property type="entry name" value="CYTB_NTER"/>
    <property type="match status" value="1"/>
</dbReference>
<reference key="1">
    <citation type="journal article" date="2001" name="Mamm. Biol.">
        <title>The phylogenetic position of southern relictual species of Microtus (Muridae: Rodentia) in North America.</title>
        <authorList>
            <person name="Conroy C.J."/>
            <person name="Hortelano Y."/>
            <person name="Cervantes F.A."/>
            <person name="Cook J.A."/>
        </authorList>
    </citation>
    <scope>NUCLEOTIDE SEQUENCE [GENOMIC DNA]</scope>
</reference>
<keyword id="KW-0249">Electron transport</keyword>
<keyword id="KW-0349">Heme</keyword>
<keyword id="KW-0408">Iron</keyword>
<keyword id="KW-0472">Membrane</keyword>
<keyword id="KW-0479">Metal-binding</keyword>
<keyword id="KW-0496">Mitochondrion</keyword>
<keyword id="KW-0999">Mitochondrion inner membrane</keyword>
<keyword id="KW-0679">Respiratory chain</keyword>
<keyword id="KW-0812">Transmembrane</keyword>
<keyword id="KW-1133">Transmembrane helix</keyword>
<keyword id="KW-0813">Transport</keyword>
<keyword id="KW-0830">Ubiquinone</keyword>
<name>CYB_MICUM</name>
<comment type="function">
    <text evidence="2">Component of the ubiquinol-cytochrome c reductase complex (complex III or cytochrome b-c1 complex) that is part of the mitochondrial respiratory chain. The b-c1 complex mediates electron transfer from ubiquinol to cytochrome c. Contributes to the generation of a proton gradient across the mitochondrial membrane that is then used for ATP synthesis.</text>
</comment>
<comment type="cofactor">
    <cofactor evidence="2">
        <name>heme b</name>
        <dbReference type="ChEBI" id="CHEBI:60344"/>
    </cofactor>
    <text evidence="2">Binds 2 heme b groups non-covalently.</text>
</comment>
<comment type="subunit">
    <text evidence="2">The cytochrome bc1 complex contains 11 subunits: 3 respiratory subunits (MT-CYB, CYC1 and UQCRFS1), 2 core proteins (UQCRC1 and UQCRC2) and 6 low-molecular weight proteins (UQCRH/QCR6, UQCRB/QCR7, UQCRQ/QCR8, UQCR10/QCR9, UQCR11/QCR10 and a cleavage product of UQCRFS1). This cytochrome bc1 complex then forms a dimer.</text>
</comment>
<comment type="subcellular location">
    <subcellularLocation>
        <location evidence="2">Mitochondrion inner membrane</location>
        <topology evidence="2">Multi-pass membrane protein</topology>
    </subcellularLocation>
</comment>
<comment type="miscellaneous">
    <text evidence="1">Heme 1 (or BL or b562) is low-potential and absorbs at about 562 nm, and heme 2 (or BH or b566) is high-potential and absorbs at about 566 nm.</text>
</comment>
<comment type="similarity">
    <text evidence="3 4">Belongs to the cytochrome b family.</text>
</comment>
<comment type="caution">
    <text evidence="2">The full-length protein contains only eight transmembrane helices, not nine as predicted by bioinformatics tools.</text>
</comment>
<sequence>MTIIRKKHPLIKIINHSFIDLPTPSNISSWWNFGSLLGLCLIIQILTGLFLAMHYTSDTATAFSSVAHICRDVNYGWLIRYMHANGASMFFICLFLHVGRGIYYGSYNMIETWNMGIILLFAVMATAFMGYVLPWGQMSFWGATVITNLLSAIPYIGTTLVEWIWGGFSVDKATLTRFFAFHFILPFIITALVLVHLLFLHETGSNNPTGLNSDSDKIPFHPYYTVKDFLGVLFLFMAFMILTLFFPDILGDPDNYTPANPLNTPPHIKPEWYFLFAYAILRSIPNKLGGVVALILSILILALMPLLHTSKQRTLTFRPITQTIYWILVADLLTLTWIGGQPVEHPFIIIGQTASIAYFTIIMILMPIAGMIENNILNLD</sequence>
<organism>
    <name type="scientific">Microtus umbrosus</name>
    <name type="common">Zempoaltepec vole</name>
    <dbReference type="NCBI Taxonomy" id="169416"/>
    <lineage>
        <taxon>Eukaryota</taxon>
        <taxon>Metazoa</taxon>
        <taxon>Chordata</taxon>
        <taxon>Craniata</taxon>
        <taxon>Vertebrata</taxon>
        <taxon>Euteleostomi</taxon>
        <taxon>Mammalia</taxon>
        <taxon>Eutheria</taxon>
        <taxon>Euarchontoglires</taxon>
        <taxon>Glires</taxon>
        <taxon>Rodentia</taxon>
        <taxon>Myomorpha</taxon>
        <taxon>Muroidea</taxon>
        <taxon>Cricetidae</taxon>
        <taxon>Arvicolinae</taxon>
        <taxon>Microtus</taxon>
    </lineage>
</organism>
<geneLocation type="mitochondrion"/>
<protein>
    <recommendedName>
        <fullName>Cytochrome b</fullName>
    </recommendedName>
    <alternativeName>
        <fullName>Complex III subunit 3</fullName>
    </alternativeName>
    <alternativeName>
        <fullName>Complex III subunit III</fullName>
    </alternativeName>
    <alternativeName>
        <fullName>Cytochrome b-c1 complex subunit 3</fullName>
    </alternativeName>
    <alternativeName>
        <fullName>Ubiquinol-cytochrome-c reductase complex cytochrome b subunit</fullName>
    </alternativeName>
</protein>